<reference key="1">
    <citation type="journal article" date="2007" name="Nat. Biotechnol.">
        <title>Complete genome sequence of the erythromycin-producing bacterium Saccharopolyspora erythraea NRRL23338.</title>
        <authorList>
            <person name="Oliynyk M."/>
            <person name="Samborskyy M."/>
            <person name="Lester J.B."/>
            <person name="Mironenko T."/>
            <person name="Scott N."/>
            <person name="Dickens S."/>
            <person name="Haydock S.F."/>
            <person name="Leadlay P.F."/>
        </authorList>
    </citation>
    <scope>NUCLEOTIDE SEQUENCE [LARGE SCALE GENOMIC DNA]</scope>
    <source>
        <strain>ATCC 11635 / DSM 40517 / JCM 4748 / NBRC 13426 / NCIMB 8594 / NRRL 2338</strain>
    </source>
</reference>
<gene>
    <name evidence="1" type="primary">mshD</name>
    <name type="ordered locus">SACE_7100</name>
</gene>
<accession>A4FQD4</accession>
<evidence type="ECO:0000255" key="1">
    <source>
        <dbReference type="HAMAP-Rule" id="MF_01698"/>
    </source>
</evidence>
<organism>
    <name type="scientific">Saccharopolyspora erythraea (strain ATCC 11635 / DSM 40517 / JCM 4748 / NBRC 13426 / NCIMB 8594 / NRRL 2338)</name>
    <dbReference type="NCBI Taxonomy" id="405948"/>
    <lineage>
        <taxon>Bacteria</taxon>
        <taxon>Bacillati</taxon>
        <taxon>Actinomycetota</taxon>
        <taxon>Actinomycetes</taxon>
        <taxon>Pseudonocardiales</taxon>
        <taxon>Pseudonocardiaceae</taxon>
        <taxon>Saccharopolyspora</taxon>
    </lineage>
</organism>
<feature type="chain" id="PRO_0000400295" description="Mycothiol acetyltransferase">
    <location>
        <begin position="1"/>
        <end position="303"/>
    </location>
</feature>
<feature type="domain" description="N-acetyltransferase 1" evidence="1">
    <location>
        <begin position="1"/>
        <end position="150"/>
    </location>
</feature>
<feature type="domain" description="N-acetyltransferase 2" evidence="1">
    <location>
        <begin position="162"/>
        <end position="303"/>
    </location>
</feature>
<feature type="binding site" evidence="1">
    <location>
        <position position="18"/>
    </location>
    <ligand>
        <name>1D-myo-inositol 2-(L-cysteinylamino)-2-deoxy-alpha-D-glucopyranoside</name>
        <dbReference type="ChEBI" id="CHEBI:58887"/>
    </ligand>
</feature>
<feature type="binding site" evidence="1">
    <location>
        <begin position="77"/>
        <end position="79"/>
    </location>
    <ligand>
        <name>acetyl-CoA</name>
        <dbReference type="ChEBI" id="CHEBI:57288"/>
        <label>1</label>
    </ligand>
</feature>
<feature type="binding site" evidence="1">
    <location>
        <position position="189"/>
    </location>
    <ligand>
        <name>1D-myo-inositol 2-(L-cysteinylamino)-2-deoxy-alpha-D-glucopyranoside</name>
        <dbReference type="ChEBI" id="CHEBI:58887"/>
    </ligand>
</feature>
<feature type="binding site" evidence="1">
    <location>
        <position position="229"/>
    </location>
    <ligand>
        <name>1D-myo-inositol 2-(L-cysteinylamino)-2-deoxy-alpha-D-glucopyranoside</name>
        <dbReference type="ChEBI" id="CHEBI:58887"/>
    </ligand>
</feature>
<feature type="binding site" evidence="1">
    <location>
        <position position="237"/>
    </location>
    <ligand>
        <name>1D-myo-inositol 2-(L-cysteinylamino)-2-deoxy-alpha-D-glucopyranoside</name>
        <dbReference type="ChEBI" id="CHEBI:58887"/>
    </ligand>
</feature>
<feature type="binding site" evidence="1">
    <location>
        <begin position="241"/>
        <end position="243"/>
    </location>
    <ligand>
        <name>acetyl-CoA</name>
        <dbReference type="ChEBI" id="CHEBI:57288"/>
        <label>2</label>
    </ligand>
</feature>
<feature type="binding site" evidence="1">
    <location>
        <begin position="248"/>
        <end position="254"/>
    </location>
    <ligand>
        <name>acetyl-CoA</name>
        <dbReference type="ChEBI" id="CHEBI:57288"/>
        <label>2</label>
    </ligand>
</feature>
<feature type="binding site" evidence="1">
    <location>
        <position position="275"/>
    </location>
    <ligand>
        <name>1D-myo-inositol 2-(L-cysteinylamino)-2-deoxy-alpha-D-glucopyranoside</name>
        <dbReference type="ChEBI" id="CHEBI:58887"/>
    </ligand>
</feature>
<feature type="binding site" evidence="1">
    <location>
        <begin position="280"/>
        <end position="285"/>
    </location>
    <ligand>
        <name>acetyl-CoA</name>
        <dbReference type="ChEBI" id="CHEBI:57288"/>
        <label>2</label>
    </ligand>
</feature>
<comment type="function">
    <text evidence="1">Catalyzes the transfer of acetyl from acetyl-CoA to desacetylmycothiol (Cys-GlcN-Ins) to form mycothiol.</text>
</comment>
<comment type="catalytic activity">
    <reaction evidence="1">
        <text>1D-myo-inositol 2-(L-cysteinylamino)-2-deoxy-alpha-D-glucopyranoside + acetyl-CoA = mycothiol + CoA + H(+)</text>
        <dbReference type="Rhea" id="RHEA:26172"/>
        <dbReference type="ChEBI" id="CHEBI:15378"/>
        <dbReference type="ChEBI" id="CHEBI:16768"/>
        <dbReference type="ChEBI" id="CHEBI:57287"/>
        <dbReference type="ChEBI" id="CHEBI:57288"/>
        <dbReference type="ChEBI" id="CHEBI:58887"/>
        <dbReference type="EC" id="2.3.1.189"/>
    </reaction>
</comment>
<comment type="subunit">
    <text evidence="1">Monomer.</text>
</comment>
<comment type="similarity">
    <text evidence="1">Belongs to the acetyltransferase family. MshD subfamily.</text>
</comment>
<proteinExistence type="inferred from homology"/>
<sequence length="303" mass="33638">MALLRETERADGVAPVGEHVILRLKAHLDVVHQIEPVQADVPGSEHFVVRDSGGELAGYAHVDTAEEKTAGQLVAELAVHPRHRRRGAGARLVEALLDRADLPVEPSPDDTDTARLRIWSHGEHPGALRLAERYGLVRARELWRMGRPLDTELAEAELPPGVTIRAFRTGVDEPAVVRVNHRAFSWHPEQGAMTEDDLRLKEREDWFDPAGFLLAVDSHDTLLGFHWTKIHPDGTGEVYVVGVDPDTQGNGLGRSLTVAGLRHLRAKGCAQVMLYVEADNTAAIKVYQRLEFARWDTDVQFGR</sequence>
<keyword id="KW-0012">Acyltransferase</keyword>
<keyword id="KW-1185">Reference proteome</keyword>
<keyword id="KW-0677">Repeat</keyword>
<keyword id="KW-0808">Transferase</keyword>
<protein>
    <recommendedName>
        <fullName evidence="1">Mycothiol acetyltransferase</fullName>
        <shortName evidence="1">MSH acetyltransferase</shortName>
        <ecNumber evidence="1">2.3.1.189</ecNumber>
    </recommendedName>
    <alternativeName>
        <fullName evidence="1">Mycothiol synthase</fullName>
    </alternativeName>
</protein>
<name>MSHD_SACEN</name>
<dbReference type="EC" id="2.3.1.189" evidence="1"/>
<dbReference type="EMBL" id="AM420293">
    <property type="protein sequence ID" value="CAM06259.1"/>
    <property type="molecule type" value="Genomic_DNA"/>
</dbReference>
<dbReference type="SMR" id="A4FQD4"/>
<dbReference type="STRING" id="405948.SACE_7100"/>
<dbReference type="KEGG" id="sen:SACE_7100"/>
<dbReference type="eggNOG" id="COG0456">
    <property type="taxonomic scope" value="Bacteria"/>
</dbReference>
<dbReference type="HOGENOM" id="CLU_068014_0_0_11"/>
<dbReference type="Proteomes" id="UP000006728">
    <property type="component" value="Chromosome"/>
</dbReference>
<dbReference type="GO" id="GO:0035447">
    <property type="term" value="F:mycothiol synthase activity"/>
    <property type="evidence" value="ECO:0007669"/>
    <property type="project" value="UniProtKB-UniRule"/>
</dbReference>
<dbReference type="GO" id="GO:0008999">
    <property type="term" value="F:protein-N-terminal-alanine acetyltransferase activity"/>
    <property type="evidence" value="ECO:0007669"/>
    <property type="project" value="TreeGrafter"/>
</dbReference>
<dbReference type="GO" id="GO:0010125">
    <property type="term" value="P:mycothiol biosynthetic process"/>
    <property type="evidence" value="ECO:0007669"/>
    <property type="project" value="UniProtKB-UniRule"/>
</dbReference>
<dbReference type="CDD" id="cd04301">
    <property type="entry name" value="NAT_SF"/>
    <property type="match status" value="1"/>
</dbReference>
<dbReference type="Gene3D" id="3.40.630.30">
    <property type="match status" value="1"/>
</dbReference>
<dbReference type="HAMAP" id="MF_01698">
    <property type="entry name" value="MshD"/>
    <property type="match status" value="1"/>
</dbReference>
<dbReference type="InterPro" id="IPR016181">
    <property type="entry name" value="Acyl_CoA_acyltransferase"/>
</dbReference>
<dbReference type="InterPro" id="IPR000182">
    <property type="entry name" value="GNAT_dom"/>
</dbReference>
<dbReference type="InterPro" id="IPR050276">
    <property type="entry name" value="MshD_Acetyltransferase"/>
</dbReference>
<dbReference type="InterPro" id="IPR017813">
    <property type="entry name" value="Mycothiol_AcTrfase"/>
</dbReference>
<dbReference type="NCBIfam" id="TIGR03448">
    <property type="entry name" value="mycothiol_MshD"/>
    <property type="match status" value="1"/>
</dbReference>
<dbReference type="PANTHER" id="PTHR43617">
    <property type="entry name" value="L-AMINO ACID N-ACETYLTRANSFERASE"/>
    <property type="match status" value="1"/>
</dbReference>
<dbReference type="PANTHER" id="PTHR43617:SF31">
    <property type="entry name" value="MYCOTHIOL ACETYLTRANSFERASE"/>
    <property type="match status" value="1"/>
</dbReference>
<dbReference type="Pfam" id="PF00583">
    <property type="entry name" value="Acetyltransf_1"/>
    <property type="match status" value="1"/>
</dbReference>
<dbReference type="Pfam" id="PF13508">
    <property type="entry name" value="Acetyltransf_7"/>
    <property type="match status" value="1"/>
</dbReference>
<dbReference type="PIRSF" id="PIRSF021524">
    <property type="entry name" value="MSH_acetyltransferase"/>
    <property type="match status" value="1"/>
</dbReference>
<dbReference type="SUPFAM" id="SSF55729">
    <property type="entry name" value="Acyl-CoA N-acyltransferases (Nat)"/>
    <property type="match status" value="1"/>
</dbReference>
<dbReference type="PROSITE" id="PS51186">
    <property type="entry name" value="GNAT"/>
    <property type="match status" value="2"/>
</dbReference>